<accession>Q8KAA4</accession>
<feature type="chain" id="PRO_0000167341" description="UPF0102 protein CT2262">
    <location>
        <begin position="1"/>
        <end position="129"/>
    </location>
</feature>
<keyword id="KW-1185">Reference proteome</keyword>
<proteinExistence type="inferred from homology"/>
<dbReference type="EMBL" id="AE006470">
    <property type="protein sequence ID" value="AAM73477.1"/>
    <property type="molecule type" value="Genomic_DNA"/>
</dbReference>
<dbReference type="RefSeq" id="NP_663135.1">
    <property type="nucleotide sequence ID" value="NC_002932.3"/>
</dbReference>
<dbReference type="RefSeq" id="WP_010933912.1">
    <property type="nucleotide sequence ID" value="NC_002932.3"/>
</dbReference>
<dbReference type="SMR" id="Q8KAA4"/>
<dbReference type="STRING" id="194439.CT2262"/>
<dbReference type="DNASU" id="1007297"/>
<dbReference type="EnsemblBacteria" id="AAM73477">
    <property type="protein sequence ID" value="AAM73477"/>
    <property type="gene ID" value="CT2262"/>
</dbReference>
<dbReference type="KEGG" id="cte:CT2262"/>
<dbReference type="eggNOG" id="COG0792">
    <property type="taxonomic scope" value="Bacteria"/>
</dbReference>
<dbReference type="HOGENOM" id="CLU_115353_2_1_10"/>
<dbReference type="OrthoDB" id="9802516at2"/>
<dbReference type="Proteomes" id="UP000001007">
    <property type="component" value="Chromosome"/>
</dbReference>
<dbReference type="GO" id="GO:0003676">
    <property type="term" value="F:nucleic acid binding"/>
    <property type="evidence" value="ECO:0007669"/>
    <property type="project" value="InterPro"/>
</dbReference>
<dbReference type="CDD" id="cd20736">
    <property type="entry name" value="PoNe_Nuclease"/>
    <property type="match status" value="1"/>
</dbReference>
<dbReference type="Gene3D" id="3.40.1350.10">
    <property type="match status" value="1"/>
</dbReference>
<dbReference type="HAMAP" id="MF_00048">
    <property type="entry name" value="UPF0102"/>
    <property type="match status" value="1"/>
</dbReference>
<dbReference type="InterPro" id="IPR011335">
    <property type="entry name" value="Restrct_endonuc-II-like"/>
</dbReference>
<dbReference type="InterPro" id="IPR011856">
    <property type="entry name" value="tRNA_endonuc-like_dom_sf"/>
</dbReference>
<dbReference type="InterPro" id="IPR003509">
    <property type="entry name" value="UPF0102_YraN-like"/>
</dbReference>
<dbReference type="NCBIfam" id="NF009150">
    <property type="entry name" value="PRK12497.1-3"/>
    <property type="match status" value="1"/>
</dbReference>
<dbReference type="NCBIfam" id="NF009154">
    <property type="entry name" value="PRK12497.3-3"/>
    <property type="match status" value="1"/>
</dbReference>
<dbReference type="NCBIfam" id="TIGR00252">
    <property type="entry name" value="YraN family protein"/>
    <property type="match status" value="1"/>
</dbReference>
<dbReference type="PANTHER" id="PTHR34039">
    <property type="entry name" value="UPF0102 PROTEIN YRAN"/>
    <property type="match status" value="1"/>
</dbReference>
<dbReference type="PANTHER" id="PTHR34039:SF1">
    <property type="entry name" value="UPF0102 PROTEIN YRAN"/>
    <property type="match status" value="1"/>
</dbReference>
<dbReference type="Pfam" id="PF02021">
    <property type="entry name" value="UPF0102"/>
    <property type="match status" value="1"/>
</dbReference>
<dbReference type="SUPFAM" id="SSF52980">
    <property type="entry name" value="Restriction endonuclease-like"/>
    <property type="match status" value="1"/>
</dbReference>
<organism>
    <name type="scientific">Chlorobaculum tepidum (strain ATCC 49652 / DSM 12025 / NBRC 103806 / TLS)</name>
    <name type="common">Chlorobium tepidum</name>
    <dbReference type="NCBI Taxonomy" id="194439"/>
    <lineage>
        <taxon>Bacteria</taxon>
        <taxon>Pseudomonadati</taxon>
        <taxon>Chlorobiota</taxon>
        <taxon>Chlorobiia</taxon>
        <taxon>Chlorobiales</taxon>
        <taxon>Chlorobiaceae</taxon>
        <taxon>Chlorobaculum</taxon>
    </lineage>
</organism>
<protein>
    <recommendedName>
        <fullName evidence="1">UPF0102 protein CT2262</fullName>
    </recommendedName>
</protein>
<sequence length="129" mass="14387">MNAPQWLGAEGEKIAARHLAAKGYRIVARNYRFHRNEIDIIAFDGEALCFIEVKTRASLGKGHPAESVTRSKQKEIARAAAGYLASLDDPWITCRFDVIAVLALSIDERSIRKYEIEHIKAAFMVGDKG</sequence>
<reference key="1">
    <citation type="journal article" date="2002" name="Proc. Natl. Acad. Sci. U.S.A.">
        <title>The complete genome sequence of Chlorobium tepidum TLS, a photosynthetic, anaerobic, green-sulfur bacterium.</title>
        <authorList>
            <person name="Eisen J.A."/>
            <person name="Nelson K.E."/>
            <person name="Paulsen I.T."/>
            <person name="Heidelberg J.F."/>
            <person name="Wu M."/>
            <person name="Dodson R.J."/>
            <person name="DeBoy R.T."/>
            <person name="Gwinn M.L."/>
            <person name="Nelson W.C."/>
            <person name="Haft D.H."/>
            <person name="Hickey E.K."/>
            <person name="Peterson J.D."/>
            <person name="Durkin A.S."/>
            <person name="Kolonay J.F."/>
            <person name="Yang F."/>
            <person name="Holt I.E."/>
            <person name="Umayam L.A."/>
            <person name="Mason T.M."/>
            <person name="Brenner M."/>
            <person name="Shea T.P."/>
            <person name="Parksey D.S."/>
            <person name="Nierman W.C."/>
            <person name="Feldblyum T.V."/>
            <person name="Hansen C.L."/>
            <person name="Craven M.B."/>
            <person name="Radune D."/>
            <person name="Vamathevan J.J."/>
            <person name="Khouri H.M."/>
            <person name="White O."/>
            <person name="Gruber T.M."/>
            <person name="Ketchum K.A."/>
            <person name="Venter J.C."/>
            <person name="Tettelin H."/>
            <person name="Bryant D.A."/>
            <person name="Fraser C.M."/>
        </authorList>
    </citation>
    <scope>NUCLEOTIDE SEQUENCE [LARGE SCALE GENOMIC DNA]</scope>
    <source>
        <strain>ATCC 49652 / DSM 12025 / NBRC 103806 / TLS</strain>
    </source>
</reference>
<gene>
    <name type="ordered locus">CT2262</name>
</gene>
<comment type="similarity">
    <text evidence="1">Belongs to the UPF0102 family.</text>
</comment>
<name>Y2262_CHLTE</name>
<evidence type="ECO:0000255" key="1">
    <source>
        <dbReference type="HAMAP-Rule" id="MF_00048"/>
    </source>
</evidence>